<protein>
    <recommendedName>
        <fullName evidence="1">NADH-quinone oxidoreductase subunit B</fullName>
        <ecNumber evidence="1">7.1.1.-</ecNumber>
    </recommendedName>
    <alternativeName>
        <fullName evidence="1">NADH dehydrogenase I subunit B</fullName>
    </alternativeName>
    <alternativeName>
        <fullName evidence="1">NDH-1 subunit B</fullName>
    </alternativeName>
</protein>
<name>NUOB_SHIDS</name>
<sequence length="220" mass="25070">MDYTLTRIDPNGENDRYPLQKQEIVTDPLEQEVNKNVFMGKLNDMVNWGRKNSIWPYNFGLSCCYVEMVTSFTAVHDVARFGAEVLRASPRQADLMVVAGTCFTKMAPVIQRLYDQMLEPKWVISMGACANSGGMYDIYSVVQGVDKFIPVDVYIPGCPPRPEAYMQALMLLQESIAKERRPLSWVVGDQGVYRANMQSERERKRGERIAVTNLRTPDEI</sequence>
<feature type="chain" id="PRO_0000376377" description="NADH-quinone oxidoreductase subunit B">
    <location>
        <begin position="1"/>
        <end position="220"/>
    </location>
</feature>
<feature type="binding site" evidence="1">
    <location>
        <position position="63"/>
    </location>
    <ligand>
        <name>[4Fe-4S] cluster</name>
        <dbReference type="ChEBI" id="CHEBI:49883"/>
    </ligand>
</feature>
<feature type="binding site" evidence="1">
    <location>
        <position position="64"/>
    </location>
    <ligand>
        <name>[4Fe-4S] cluster</name>
        <dbReference type="ChEBI" id="CHEBI:49883"/>
    </ligand>
</feature>
<feature type="binding site" evidence="1">
    <location>
        <position position="129"/>
    </location>
    <ligand>
        <name>[4Fe-4S] cluster</name>
        <dbReference type="ChEBI" id="CHEBI:49883"/>
    </ligand>
</feature>
<feature type="binding site" evidence="1">
    <location>
        <position position="158"/>
    </location>
    <ligand>
        <name>[4Fe-4S] cluster</name>
        <dbReference type="ChEBI" id="CHEBI:49883"/>
    </ligand>
</feature>
<evidence type="ECO:0000255" key="1">
    <source>
        <dbReference type="HAMAP-Rule" id="MF_01356"/>
    </source>
</evidence>
<organism>
    <name type="scientific">Shigella dysenteriae serotype 1 (strain Sd197)</name>
    <dbReference type="NCBI Taxonomy" id="300267"/>
    <lineage>
        <taxon>Bacteria</taxon>
        <taxon>Pseudomonadati</taxon>
        <taxon>Pseudomonadota</taxon>
        <taxon>Gammaproteobacteria</taxon>
        <taxon>Enterobacterales</taxon>
        <taxon>Enterobacteriaceae</taxon>
        <taxon>Shigella</taxon>
    </lineage>
</organism>
<gene>
    <name evidence="1" type="primary">nuoB</name>
    <name type="ordered locus">SDY_2483</name>
</gene>
<accession>Q32DQ2</accession>
<keyword id="KW-0004">4Fe-4S</keyword>
<keyword id="KW-0997">Cell inner membrane</keyword>
<keyword id="KW-1003">Cell membrane</keyword>
<keyword id="KW-0408">Iron</keyword>
<keyword id="KW-0411">Iron-sulfur</keyword>
<keyword id="KW-0472">Membrane</keyword>
<keyword id="KW-0479">Metal-binding</keyword>
<keyword id="KW-0520">NAD</keyword>
<keyword id="KW-0874">Quinone</keyword>
<keyword id="KW-1185">Reference proteome</keyword>
<keyword id="KW-1278">Translocase</keyword>
<keyword id="KW-0813">Transport</keyword>
<keyword id="KW-0830">Ubiquinone</keyword>
<proteinExistence type="inferred from homology"/>
<comment type="function">
    <text evidence="1">NDH-1 shuttles electrons from NADH, via FMN and iron-sulfur (Fe-S) centers, to quinones in the respiratory chain. The immediate electron acceptor for the enzyme in this species is believed to be ubiquinone. Couples the redox reaction to proton translocation (for every two electrons transferred, four hydrogen ions are translocated across the cytoplasmic membrane), and thus conserves the redox energy in a proton gradient.</text>
</comment>
<comment type="catalytic activity">
    <reaction evidence="1">
        <text>a quinone + NADH + 5 H(+)(in) = a quinol + NAD(+) + 4 H(+)(out)</text>
        <dbReference type="Rhea" id="RHEA:57888"/>
        <dbReference type="ChEBI" id="CHEBI:15378"/>
        <dbReference type="ChEBI" id="CHEBI:24646"/>
        <dbReference type="ChEBI" id="CHEBI:57540"/>
        <dbReference type="ChEBI" id="CHEBI:57945"/>
        <dbReference type="ChEBI" id="CHEBI:132124"/>
    </reaction>
</comment>
<comment type="cofactor">
    <cofactor evidence="1">
        <name>[4Fe-4S] cluster</name>
        <dbReference type="ChEBI" id="CHEBI:49883"/>
    </cofactor>
    <text evidence="1">Binds 1 [4Fe-4S] cluster.</text>
</comment>
<comment type="subunit">
    <text evidence="1">NDH-1 is composed of 13 different subunits. Subunits NuoB, CD, E, F, and G constitute the peripheral sector of the complex.</text>
</comment>
<comment type="subcellular location">
    <subcellularLocation>
        <location evidence="1">Cell inner membrane</location>
        <topology evidence="1">Peripheral membrane protein</topology>
        <orientation evidence="1">Cytoplasmic side</orientation>
    </subcellularLocation>
</comment>
<comment type="similarity">
    <text evidence="1">Belongs to the complex I 20 kDa subunit family.</text>
</comment>
<dbReference type="EC" id="7.1.1.-" evidence="1"/>
<dbReference type="EMBL" id="CP000034">
    <property type="protein sequence ID" value="ABB62553.1"/>
    <property type="molecule type" value="Genomic_DNA"/>
</dbReference>
<dbReference type="RefSeq" id="WP_000386732.1">
    <property type="nucleotide sequence ID" value="NC_007606.1"/>
</dbReference>
<dbReference type="RefSeq" id="YP_404044.1">
    <property type="nucleotide sequence ID" value="NC_007606.1"/>
</dbReference>
<dbReference type="SMR" id="Q32DQ2"/>
<dbReference type="STRING" id="300267.SDY_2483"/>
<dbReference type="EnsemblBacteria" id="ABB62553">
    <property type="protein sequence ID" value="ABB62553"/>
    <property type="gene ID" value="SDY_2483"/>
</dbReference>
<dbReference type="KEGG" id="sdy:SDY_2483"/>
<dbReference type="PATRIC" id="fig|300267.13.peg.2994"/>
<dbReference type="HOGENOM" id="CLU_055737_7_3_6"/>
<dbReference type="Proteomes" id="UP000002716">
    <property type="component" value="Chromosome"/>
</dbReference>
<dbReference type="GO" id="GO:0005886">
    <property type="term" value="C:plasma membrane"/>
    <property type="evidence" value="ECO:0007669"/>
    <property type="project" value="UniProtKB-SubCell"/>
</dbReference>
<dbReference type="GO" id="GO:0045271">
    <property type="term" value="C:respiratory chain complex I"/>
    <property type="evidence" value="ECO:0007669"/>
    <property type="project" value="TreeGrafter"/>
</dbReference>
<dbReference type="GO" id="GO:0051539">
    <property type="term" value="F:4 iron, 4 sulfur cluster binding"/>
    <property type="evidence" value="ECO:0007669"/>
    <property type="project" value="UniProtKB-KW"/>
</dbReference>
<dbReference type="GO" id="GO:0005506">
    <property type="term" value="F:iron ion binding"/>
    <property type="evidence" value="ECO:0007669"/>
    <property type="project" value="UniProtKB-UniRule"/>
</dbReference>
<dbReference type="GO" id="GO:0008137">
    <property type="term" value="F:NADH dehydrogenase (ubiquinone) activity"/>
    <property type="evidence" value="ECO:0007669"/>
    <property type="project" value="InterPro"/>
</dbReference>
<dbReference type="GO" id="GO:0050136">
    <property type="term" value="F:NADH:ubiquinone reductase (non-electrogenic) activity"/>
    <property type="evidence" value="ECO:0007669"/>
    <property type="project" value="UniProtKB-UniRule"/>
</dbReference>
<dbReference type="GO" id="GO:0048038">
    <property type="term" value="F:quinone binding"/>
    <property type="evidence" value="ECO:0007669"/>
    <property type="project" value="UniProtKB-KW"/>
</dbReference>
<dbReference type="GO" id="GO:0009060">
    <property type="term" value="P:aerobic respiration"/>
    <property type="evidence" value="ECO:0007669"/>
    <property type="project" value="TreeGrafter"/>
</dbReference>
<dbReference type="GO" id="GO:0015990">
    <property type="term" value="P:electron transport coupled proton transport"/>
    <property type="evidence" value="ECO:0007669"/>
    <property type="project" value="TreeGrafter"/>
</dbReference>
<dbReference type="FunFam" id="3.40.50.12280:FF:000002">
    <property type="entry name" value="NADH-quinone oxidoreductase subunit B"/>
    <property type="match status" value="1"/>
</dbReference>
<dbReference type="Gene3D" id="3.40.50.12280">
    <property type="match status" value="1"/>
</dbReference>
<dbReference type="HAMAP" id="MF_01356">
    <property type="entry name" value="NDH1_NuoB"/>
    <property type="match status" value="1"/>
</dbReference>
<dbReference type="InterPro" id="IPR006137">
    <property type="entry name" value="NADH_UbQ_OxRdtase-like_20kDa"/>
</dbReference>
<dbReference type="InterPro" id="IPR006138">
    <property type="entry name" value="NADH_UQ_OxRdtase_20Kd_su"/>
</dbReference>
<dbReference type="NCBIfam" id="TIGR01957">
    <property type="entry name" value="nuoB_fam"/>
    <property type="match status" value="1"/>
</dbReference>
<dbReference type="NCBIfam" id="NF005012">
    <property type="entry name" value="PRK06411.1"/>
    <property type="match status" value="1"/>
</dbReference>
<dbReference type="PANTHER" id="PTHR11995">
    <property type="entry name" value="NADH DEHYDROGENASE"/>
    <property type="match status" value="1"/>
</dbReference>
<dbReference type="PANTHER" id="PTHR11995:SF14">
    <property type="entry name" value="NADH DEHYDROGENASE [UBIQUINONE] IRON-SULFUR PROTEIN 7, MITOCHONDRIAL"/>
    <property type="match status" value="1"/>
</dbReference>
<dbReference type="Pfam" id="PF01058">
    <property type="entry name" value="Oxidored_q6"/>
    <property type="match status" value="1"/>
</dbReference>
<dbReference type="SUPFAM" id="SSF56770">
    <property type="entry name" value="HydA/Nqo6-like"/>
    <property type="match status" value="1"/>
</dbReference>
<dbReference type="PROSITE" id="PS01150">
    <property type="entry name" value="COMPLEX1_20K"/>
    <property type="match status" value="1"/>
</dbReference>
<reference key="1">
    <citation type="journal article" date="2005" name="Nucleic Acids Res.">
        <title>Genome dynamics and diversity of Shigella species, the etiologic agents of bacillary dysentery.</title>
        <authorList>
            <person name="Yang F."/>
            <person name="Yang J."/>
            <person name="Zhang X."/>
            <person name="Chen L."/>
            <person name="Jiang Y."/>
            <person name="Yan Y."/>
            <person name="Tang X."/>
            <person name="Wang J."/>
            <person name="Xiong Z."/>
            <person name="Dong J."/>
            <person name="Xue Y."/>
            <person name="Zhu Y."/>
            <person name="Xu X."/>
            <person name="Sun L."/>
            <person name="Chen S."/>
            <person name="Nie H."/>
            <person name="Peng J."/>
            <person name="Xu J."/>
            <person name="Wang Y."/>
            <person name="Yuan Z."/>
            <person name="Wen Y."/>
            <person name="Yao Z."/>
            <person name="Shen Y."/>
            <person name="Qiang B."/>
            <person name="Hou Y."/>
            <person name="Yu J."/>
            <person name="Jin Q."/>
        </authorList>
    </citation>
    <scope>NUCLEOTIDE SEQUENCE [LARGE SCALE GENOMIC DNA]</scope>
    <source>
        <strain>Sd197</strain>
    </source>
</reference>